<protein>
    <recommendedName>
        <fullName>Clavesin-2</fullName>
    </recommendedName>
    <alternativeName>
        <fullName>Retinaldehyde-binding protein 1-like 2</fullName>
    </alternativeName>
    <alternativeName>
        <fullName evidence="7">clathrin vesicle-associated Sec14 protein 2</fullName>
    </alternativeName>
</protein>
<dbReference type="EMBL" id="AK095527">
    <property type="protein sequence ID" value="BAG53077.1"/>
    <property type="molecule type" value="mRNA"/>
</dbReference>
<dbReference type="EMBL" id="AK295158">
    <property type="protein sequence ID" value="BAG58172.1"/>
    <property type="molecule type" value="mRNA"/>
</dbReference>
<dbReference type="EMBL" id="AL591428">
    <property type="status" value="NOT_ANNOTATED_CDS"/>
    <property type="molecule type" value="Genomic_DNA"/>
</dbReference>
<dbReference type="EMBL" id="CH471051">
    <property type="protein sequence ID" value="EAW48161.1"/>
    <property type="molecule type" value="Genomic_DNA"/>
</dbReference>
<dbReference type="EMBL" id="BC101376">
    <property type="protein sequence ID" value="AAI01377.1"/>
    <property type="molecule type" value="mRNA"/>
</dbReference>
<dbReference type="EMBL" id="BC101377">
    <property type="protein sequence ID" value="AAI01378.1"/>
    <property type="molecule type" value="mRNA"/>
</dbReference>
<dbReference type="EMBL" id="DC324799">
    <property type="status" value="NOT_ANNOTATED_CDS"/>
    <property type="molecule type" value="mRNA"/>
</dbReference>
<dbReference type="EMBL" id="BK006900">
    <property type="protein sequence ID" value="DAA06537.1"/>
    <property type="molecule type" value="mRNA"/>
</dbReference>
<dbReference type="CCDS" id="CCDS34525.1">
    <molecule id="Q5SYC1-1"/>
</dbReference>
<dbReference type="RefSeq" id="NP_001010852.2">
    <molecule id="Q5SYC1-1"/>
    <property type="nucleotide sequence ID" value="NM_001010852.4"/>
</dbReference>
<dbReference type="RefSeq" id="XP_016865755.1">
    <property type="nucleotide sequence ID" value="XM_017010266.1"/>
</dbReference>
<dbReference type="RefSeq" id="XP_054210233.1">
    <molecule id="Q5SYC1-1"/>
    <property type="nucleotide sequence ID" value="XM_054354258.1"/>
</dbReference>
<dbReference type="SMR" id="Q5SYC1"/>
<dbReference type="BioGRID" id="126414">
    <property type="interactions" value="20"/>
</dbReference>
<dbReference type="FunCoup" id="Q5SYC1">
    <property type="interactions" value="111"/>
</dbReference>
<dbReference type="IntAct" id="Q5SYC1">
    <property type="interactions" value="19"/>
</dbReference>
<dbReference type="STRING" id="9606.ENSP00000275162"/>
<dbReference type="iPTMnet" id="Q5SYC1"/>
<dbReference type="PhosphoSitePlus" id="Q5SYC1"/>
<dbReference type="BioMuta" id="CLVS2"/>
<dbReference type="DMDM" id="74744054"/>
<dbReference type="MassIVE" id="Q5SYC1"/>
<dbReference type="PaxDb" id="9606-ENSP00000275162"/>
<dbReference type="PeptideAtlas" id="Q5SYC1"/>
<dbReference type="ProteomicsDB" id="64024">
    <molecule id="Q5SYC1-1"/>
</dbReference>
<dbReference type="ProteomicsDB" id="64025">
    <molecule id="Q5SYC1-2"/>
</dbReference>
<dbReference type="Antibodypedia" id="46590">
    <property type="antibodies" value="87 antibodies from 20 providers"/>
</dbReference>
<dbReference type="DNASU" id="134829"/>
<dbReference type="Ensembl" id="ENST00000275162.10">
    <molecule id="Q5SYC1-1"/>
    <property type="protein sequence ID" value="ENSP00000275162.4"/>
    <property type="gene ID" value="ENSG00000146352.13"/>
</dbReference>
<dbReference type="Ensembl" id="ENST00000368438.1">
    <molecule id="Q5SYC1-2"/>
    <property type="protein sequence ID" value="ENSP00000357423.1"/>
    <property type="gene ID" value="ENSG00000146352.13"/>
</dbReference>
<dbReference type="GeneID" id="134829"/>
<dbReference type="KEGG" id="hsa:134829"/>
<dbReference type="MANE-Select" id="ENST00000275162.10">
    <property type="protein sequence ID" value="ENSP00000275162.4"/>
    <property type="RefSeq nucleotide sequence ID" value="NM_001010852.4"/>
    <property type="RefSeq protein sequence ID" value="NP_001010852.2"/>
</dbReference>
<dbReference type="UCSC" id="uc003pzi.3">
    <molecule id="Q5SYC1-1"/>
    <property type="organism name" value="human"/>
</dbReference>
<dbReference type="AGR" id="HGNC:23046"/>
<dbReference type="CTD" id="134829"/>
<dbReference type="DisGeNET" id="134829"/>
<dbReference type="GeneCards" id="CLVS2"/>
<dbReference type="HGNC" id="HGNC:23046">
    <property type="gene designation" value="CLVS2"/>
</dbReference>
<dbReference type="HPA" id="ENSG00000146352">
    <property type="expression patterns" value="Group enriched (brain, retina)"/>
</dbReference>
<dbReference type="MIM" id="616945">
    <property type="type" value="gene"/>
</dbReference>
<dbReference type="neXtProt" id="NX_Q5SYC1"/>
<dbReference type="OpenTargets" id="ENSG00000146352"/>
<dbReference type="PharmGKB" id="PA165617885"/>
<dbReference type="VEuPathDB" id="HostDB:ENSG00000146352"/>
<dbReference type="eggNOG" id="KOG1471">
    <property type="taxonomic scope" value="Eukaryota"/>
</dbReference>
<dbReference type="GeneTree" id="ENSGT00940000157632"/>
<dbReference type="HOGENOM" id="CLU_046597_1_3_1"/>
<dbReference type="InParanoid" id="Q5SYC1"/>
<dbReference type="OMA" id="DEEPDYC"/>
<dbReference type="OrthoDB" id="7837562at2759"/>
<dbReference type="PAN-GO" id="Q5SYC1">
    <property type="GO annotations" value="5 GO annotations based on evolutionary models"/>
</dbReference>
<dbReference type="PhylomeDB" id="Q5SYC1"/>
<dbReference type="PathwayCommons" id="Q5SYC1"/>
<dbReference type="Reactome" id="R-HSA-432720">
    <property type="pathway name" value="Lysosome Vesicle Biogenesis"/>
</dbReference>
<dbReference type="SignaLink" id="Q5SYC1"/>
<dbReference type="BioGRID-ORCS" id="134829">
    <property type="hits" value="12 hits in 1140 CRISPR screens"/>
</dbReference>
<dbReference type="ChiTaRS" id="CLVS2">
    <property type="organism name" value="human"/>
</dbReference>
<dbReference type="GenomeRNAi" id="134829"/>
<dbReference type="Pharos" id="Q5SYC1">
    <property type="development level" value="Tbio"/>
</dbReference>
<dbReference type="PRO" id="PR:Q5SYC1"/>
<dbReference type="Proteomes" id="UP000005640">
    <property type="component" value="Chromosome 6"/>
</dbReference>
<dbReference type="RNAct" id="Q5SYC1">
    <property type="molecule type" value="protein"/>
</dbReference>
<dbReference type="Bgee" id="ENSG00000146352">
    <property type="expression patterns" value="Expressed in cerebellar cortex and 57 other cell types or tissues"/>
</dbReference>
<dbReference type="GO" id="GO:0030136">
    <property type="term" value="C:clathrin-coated vesicle"/>
    <property type="evidence" value="ECO:0000250"/>
    <property type="project" value="UniProtKB"/>
</dbReference>
<dbReference type="GO" id="GO:0031901">
    <property type="term" value="C:early endosome membrane"/>
    <property type="evidence" value="ECO:0007669"/>
    <property type="project" value="UniProtKB-SubCell"/>
</dbReference>
<dbReference type="GO" id="GO:0005768">
    <property type="term" value="C:endosome"/>
    <property type="evidence" value="ECO:0000314"/>
    <property type="project" value="UniProtKB"/>
</dbReference>
<dbReference type="GO" id="GO:0005802">
    <property type="term" value="C:trans-Golgi network"/>
    <property type="evidence" value="ECO:0000250"/>
    <property type="project" value="UniProtKB"/>
</dbReference>
<dbReference type="GO" id="GO:0032588">
    <property type="term" value="C:trans-Golgi network membrane"/>
    <property type="evidence" value="ECO:0000304"/>
    <property type="project" value="Reactome"/>
</dbReference>
<dbReference type="GO" id="GO:1902936">
    <property type="term" value="F:phosphatidylinositol bisphosphate binding"/>
    <property type="evidence" value="ECO:0000318"/>
    <property type="project" value="GO_Central"/>
</dbReference>
<dbReference type="GO" id="GO:0080025">
    <property type="term" value="F:phosphatidylinositol-3,5-bisphosphate binding"/>
    <property type="evidence" value="ECO:0000314"/>
    <property type="project" value="UniProtKB"/>
</dbReference>
<dbReference type="GO" id="GO:0007040">
    <property type="term" value="P:lysosome organization"/>
    <property type="evidence" value="ECO:0000250"/>
    <property type="project" value="UniProtKB"/>
</dbReference>
<dbReference type="CDD" id="cd00170">
    <property type="entry name" value="SEC14"/>
    <property type="match status" value="1"/>
</dbReference>
<dbReference type="FunFam" id="1.10.8.20:FF:000001">
    <property type="entry name" value="Alpha-tocopherol transfer protein-like"/>
    <property type="match status" value="1"/>
</dbReference>
<dbReference type="FunFam" id="3.40.525.10:FF:000002">
    <property type="entry name" value="Alpha-tocopherol transfer protein-like"/>
    <property type="match status" value="1"/>
</dbReference>
<dbReference type="FunFam" id="1.20.5.1200:FF:000001">
    <property type="entry name" value="Clavesin 2"/>
    <property type="match status" value="1"/>
</dbReference>
<dbReference type="Gene3D" id="1.20.5.1200">
    <property type="entry name" value="Alpha-tocopherol transfer"/>
    <property type="match status" value="1"/>
</dbReference>
<dbReference type="Gene3D" id="3.40.525.10">
    <property type="entry name" value="CRAL-TRIO lipid binding domain"/>
    <property type="match status" value="1"/>
</dbReference>
<dbReference type="Gene3D" id="1.10.8.20">
    <property type="entry name" value="N-terminal domain of phosphatidylinositol transfer protein sec14p"/>
    <property type="match status" value="1"/>
</dbReference>
<dbReference type="InterPro" id="IPR001251">
    <property type="entry name" value="CRAL-TRIO_dom"/>
</dbReference>
<dbReference type="InterPro" id="IPR036865">
    <property type="entry name" value="CRAL-TRIO_dom_sf"/>
</dbReference>
<dbReference type="InterPro" id="IPR011074">
    <property type="entry name" value="CRAL/TRIO_N_dom"/>
</dbReference>
<dbReference type="InterPro" id="IPR036273">
    <property type="entry name" value="CRAL/TRIO_N_dom_sf"/>
</dbReference>
<dbReference type="PANTHER" id="PTHR10174">
    <property type="entry name" value="ALPHA-TOCOPHEROL TRANSFER PROTEIN-RELATED"/>
    <property type="match status" value="1"/>
</dbReference>
<dbReference type="PANTHER" id="PTHR10174:SF73">
    <property type="entry name" value="CLAVESIN-2"/>
    <property type="match status" value="1"/>
</dbReference>
<dbReference type="Pfam" id="PF00650">
    <property type="entry name" value="CRAL_TRIO"/>
    <property type="match status" value="1"/>
</dbReference>
<dbReference type="Pfam" id="PF03765">
    <property type="entry name" value="CRAL_TRIO_N"/>
    <property type="match status" value="1"/>
</dbReference>
<dbReference type="PRINTS" id="PR00180">
    <property type="entry name" value="CRETINALDHBP"/>
</dbReference>
<dbReference type="SMART" id="SM01100">
    <property type="entry name" value="CRAL_TRIO_N"/>
    <property type="match status" value="1"/>
</dbReference>
<dbReference type="SMART" id="SM00516">
    <property type="entry name" value="SEC14"/>
    <property type="match status" value="1"/>
</dbReference>
<dbReference type="SUPFAM" id="SSF52087">
    <property type="entry name" value="CRAL/TRIO domain"/>
    <property type="match status" value="1"/>
</dbReference>
<dbReference type="SUPFAM" id="SSF46938">
    <property type="entry name" value="CRAL/TRIO N-terminal domain"/>
    <property type="match status" value="1"/>
</dbReference>
<dbReference type="PROSITE" id="PS50191">
    <property type="entry name" value="CRAL_TRIO"/>
    <property type="match status" value="1"/>
</dbReference>
<evidence type="ECO:0000250" key="1"/>
<evidence type="ECO:0000250" key="2">
    <source>
        <dbReference type="UniProtKB" id="A6JUQ6"/>
    </source>
</evidence>
<evidence type="ECO:0000255" key="3">
    <source>
        <dbReference type="PROSITE-ProRule" id="PRU00056"/>
    </source>
</evidence>
<evidence type="ECO:0000256" key="4">
    <source>
        <dbReference type="SAM" id="MobiDB-lite"/>
    </source>
</evidence>
<evidence type="ECO:0000269" key="5">
    <source>
    </source>
</evidence>
<evidence type="ECO:0000303" key="6">
    <source>
    </source>
</evidence>
<evidence type="ECO:0000303" key="7">
    <source>
    </source>
</evidence>
<accession>Q5SYC1</accession>
<accession>B3KTG5</accession>
<accession>B4DHL0</accession>
<accession>C8UZT4</accession>
<accession>Q5SYC0</accession>
<comment type="function">
    <text evidence="1 5">Required for normal morphology of late endosomes and/or lysosomes in neurons (By similarity). Binds phosphatidylinositol 3,5-bisphosphate (PtdIns(3,5)P2).</text>
</comment>
<comment type="subunit">
    <text evidence="5">Forms a complex with clathrin heavy chain and gamma-adaptin.</text>
</comment>
<comment type="interaction">
    <interactant intactId="EBI-12357161">
        <id>Q5SYC1</id>
    </interactant>
    <interactant intactId="EBI-11989522">
        <id>Q7Z589-5</id>
        <label>EMSY</label>
    </interactant>
    <organismsDiffer>false</organismsDiffer>
    <experiments>3</experiments>
</comment>
<comment type="interaction">
    <interactant intactId="EBI-12357161">
        <id>Q5SYC1</id>
    </interactant>
    <interactant intactId="EBI-914727">
        <id>Q9UKT8</id>
        <label>FBXW2</label>
    </interactant>
    <organismsDiffer>false</organismsDiffer>
    <experiments>3</experiments>
</comment>
<comment type="interaction">
    <interactant intactId="EBI-12357161">
        <id>Q5SYC1</id>
    </interactant>
    <interactant intactId="EBI-11526128">
        <id>Q8NFF5-2</id>
        <label>FLAD1</label>
    </interactant>
    <organismsDiffer>false</organismsDiffer>
    <experiments>3</experiments>
</comment>
<comment type="interaction">
    <interactant intactId="EBI-12357161">
        <id>Q5SYC1</id>
    </interactant>
    <interactant intactId="EBI-3910586">
        <id>Q13630</id>
        <label>GFUS</label>
    </interactant>
    <organismsDiffer>false</organismsDiffer>
    <experiments>3</experiments>
</comment>
<comment type="interaction">
    <interactant intactId="EBI-12357161">
        <id>Q5SYC1</id>
    </interactant>
    <interactant intactId="EBI-350350">
        <id>P21266</id>
        <label>GSTM3</label>
    </interactant>
    <organismsDiffer>false</organismsDiffer>
    <experiments>3</experiments>
</comment>
<comment type="interaction">
    <interactant intactId="EBI-12357161">
        <id>Q5SYC1</id>
    </interactant>
    <interactant intactId="EBI-748043">
        <id>O43708</id>
        <label>GSTZ1</label>
    </interactant>
    <organismsDiffer>false</organismsDiffer>
    <experiments>3</experiments>
</comment>
<comment type="interaction">
    <interactant intactId="EBI-12357161">
        <id>Q5SYC1</id>
    </interactant>
    <interactant intactId="EBI-740553">
        <id>P13807</id>
        <label>GYS1</label>
    </interactant>
    <organismsDiffer>false</organismsDiffer>
    <experiments>3</experiments>
</comment>
<comment type="interaction">
    <interactant intactId="EBI-12357161">
        <id>Q5SYC1</id>
    </interactant>
    <interactant intactId="EBI-12024294">
        <id>Q674X7-2</id>
        <label>KAZN</label>
    </interactant>
    <organismsDiffer>false</organismsDiffer>
    <experiments>3</experiments>
</comment>
<comment type="interaction">
    <interactant intactId="EBI-12357161">
        <id>Q5SYC1</id>
    </interactant>
    <interactant intactId="EBI-16439278">
        <id>Q6FHY5</id>
        <label>MEOX2</label>
    </interactant>
    <organismsDiffer>false</organismsDiffer>
    <experiments>3</experiments>
</comment>
<comment type="interaction">
    <interactant intactId="EBI-12357161">
        <id>Q5SYC1</id>
    </interactant>
    <interactant intactId="EBI-519141">
        <id>P12883</id>
        <label>MYH7</label>
    </interactant>
    <organismsDiffer>false</organismsDiffer>
    <experiments>3</experiments>
</comment>
<comment type="interaction">
    <interactant intactId="EBI-12357161">
        <id>Q5SYC1</id>
    </interactant>
    <interactant intactId="EBI-928842">
        <id>Q9GZM8</id>
        <label>NDEL1</label>
    </interactant>
    <organismsDiffer>false</organismsDiffer>
    <experiments>3</experiments>
</comment>
<comment type="interaction">
    <interactant intactId="EBI-12357161">
        <id>Q5SYC1</id>
    </interactant>
    <interactant intactId="EBI-713724">
        <id>P68402</id>
        <label>PAFAH1B2</label>
    </interactant>
    <organismsDiffer>false</organismsDiffer>
    <experiments>3</experiments>
</comment>
<comment type="interaction">
    <interactant intactId="EBI-12357161">
        <id>Q5SYC1</id>
    </interactant>
    <interactant intactId="EBI-750317">
        <id>Q99447</id>
        <label>PCYT2</label>
    </interactant>
    <organismsDiffer>false</organismsDiffer>
    <experiments>3</experiments>
</comment>
<comment type="interaction">
    <interactant intactId="EBI-12357161">
        <id>Q5SYC1</id>
    </interactant>
    <interactant intactId="EBI-2511669">
        <id>P15259</id>
        <label>PGAM2</label>
    </interactant>
    <organismsDiffer>false</organismsDiffer>
    <experiments>3</experiments>
</comment>
<comment type="interaction">
    <interactant intactId="EBI-12357161">
        <id>Q5SYC1</id>
    </interactant>
    <interactant intactId="EBI-11081747">
        <id>Q6ICB4</id>
        <label>PHETA2</label>
    </interactant>
    <organismsDiffer>false</organismsDiffer>
    <experiments>3</experiments>
</comment>
<comment type="interaction">
    <interactant intactId="EBI-12357161">
        <id>Q5SYC1</id>
    </interactant>
    <interactant intactId="EBI-357520">
        <id>P31151</id>
        <label>S100A7</label>
    </interactant>
    <organismsDiffer>false</organismsDiffer>
    <experiments>3</experiments>
</comment>
<comment type="interaction">
    <interactant intactId="EBI-12357161">
        <id>Q5SYC1</id>
    </interactant>
    <interactant intactId="EBI-13077820">
        <id>Q86SG5</id>
        <label>S100A7A</label>
    </interactant>
    <organismsDiffer>false</organismsDiffer>
    <experiments>3</experiments>
</comment>
<comment type="interaction">
    <interactant intactId="EBI-12357161">
        <id>Q5SYC1</id>
    </interactant>
    <interactant intactId="EBI-14211313">
        <id>B2RWP4</id>
        <label>TACC2</label>
    </interactant>
    <organismsDiffer>false</organismsDiffer>
    <experiments>3</experiments>
</comment>
<comment type="subcellular location">
    <subcellularLocation>
        <location evidence="1">Golgi apparatus</location>
        <location evidence="1">trans-Golgi network membrane</location>
        <topology evidence="1">Peripheral membrane protein</topology>
    </subcellularLocation>
    <subcellularLocation>
        <location evidence="1">Cytoplasmic vesicle</location>
        <location evidence="1">Clathrin-coated vesicle</location>
    </subcellularLocation>
    <subcellularLocation>
        <location evidence="5">Early endosome membrane</location>
        <topology evidence="5">Peripheral membrane protein</topology>
    </subcellularLocation>
</comment>
<comment type="alternative products">
    <event type="alternative splicing"/>
    <isoform>
        <id>Q5SYC1-1</id>
        <name>1</name>
        <sequence type="displayed"/>
    </isoform>
    <isoform>
        <id>Q5SYC1-2</id>
        <name>2</name>
        <sequence type="described" ref="VSP_027325"/>
    </isoform>
</comment>
<comment type="domain">
    <text evidence="5">The CRAL-TRIO domain is required for targeting to the membrane and for binding PtdIns(3,5)P2.</text>
</comment>
<comment type="miscellaneous">
    <text evidence="1">Binding to PtdIns(3,5)P2 is not required for localization.</text>
</comment>
<reference key="1">
    <citation type="journal article" date="2004" name="Nat. Genet.">
        <title>Complete sequencing and characterization of 21,243 full-length human cDNAs.</title>
        <authorList>
            <person name="Ota T."/>
            <person name="Suzuki Y."/>
            <person name="Nishikawa T."/>
            <person name="Otsuki T."/>
            <person name="Sugiyama T."/>
            <person name="Irie R."/>
            <person name="Wakamatsu A."/>
            <person name="Hayashi K."/>
            <person name="Sato H."/>
            <person name="Nagai K."/>
            <person name="Kimura K."/>
            <person name="Makita H."/>
            <person name="Sekine M."/>
            <person name="Obayashi M."/>
            <person name="Nishi T."/>
            <person name="Shibahara T."/>
            <person name="Tanaka T."/>
            <person name="Ishii S."/>
            <person name="Yamamoto J."/>
            <person name="Saito K."/>
            <person name="Kawai Y."/>
            <person name="Isono Y."/>
            <person name="Nakamura Y."/>
            <person name="Nagahari K."/>
            <person name="Murakami K."/>
            <person name="Yasuda T."/>
            <person name="Iwayanagi T."/>
            <person name="Wagatsuma M."/>
            <person name="Shiratori A."/>
            <person name="Sudo H."/>
            <person name="Hosoiri T."/>
            <person name="Kaku Y."/>
            <person name="Kodaira H."/>
            <person name="Kondo H."/>
            <person name="Sugawara M."/>
            <person name="Takahashi M."/>
            <person name="Kanda K."/>
            <person name="Yokoi T."/>
            <person name="Furuya T."/>
            <person name="Kikkawa E."/>
            <person name="Omura Y."/>
            <person name="Abe K."/>
            <person name="Kamihara K."/>
            <person name="Katsuta N."/>
            <person name="Sato K."/>
            <person name="Tanikawa M."/>
            <person name="Yamazaki M."/>
            <person name="Ninomiya K."/>
            <person name="Ishibashi T."/>
            <person name="Yamashita H."/>
            <person name="Murakawa K."/>
            <person name="Fujimori K."/>
            <person name="Tanai H."/>
            <person name="Kimata M."/>
            <person name="Watanabe M."/>
            <person name="Hiraoka S."/>
            <person name="Chiba Y."/>
            <person name="Ishida S."/>
            <person name="Ono Y."/>
            <person name="Takiguchi S."/>
            <person name="Watanabe S."/>
            <person name="Yosida M."/>
            <person name="Hotuta T."/>
            <person name="Kusano J."/>
            <person name="Kanehori K."/>
            <person name="Takahashi-Fujii A."/>
            <person name="Hara H."/>
            <person name="Tanase T.-O."/>
            <person name="Nomura Y."/>
            <person name="Togiya S."/>
            <person name="Komai F."/>
            <person name="Hara R."/>
            <person name="Takeuchi K."/>
            <person name="Arita M."/>
            <person name="Imose N."/>
            <person name="Musashino K."/>
            <person name="Yuuki H."/>
            <person name="Oshima A."/>
            <person name="Sasaki N."/>
            <person name="Aotsuka S."/>
            <person name="Yoshikawa Y."/>
            <person name="Matsunawa H."/>
            <person name="Ichihara T."/>
            <person name="Shiohata N."/>
            <person name="Sano S."/>
            <person name="Moriya S."/>
            <person name="Momiyama H."/>
            <person name="Satoh N."/>
            <person name="Takami S."/>
            <person name="Terashima Y."/>
            <person name="Suzuki O."/>
            <person name="Nakagawa S."/>
            <person name="Senoh A."/>
            <person name="Mizoguchi H."/>
            <person name="Goto Y."/>
            <person name="Shimizu F."/>
            <person name="Wakebe H."/>
            <person name="Hishigaki H."/>
            <person name="Watanabe T."/>
            <person name="Sugiyama A."/>
            <person name="Takemoto M."/>
            <person name="Kawakami B."/>
            <person name="Yamazaki M."/>
            <person name="Watanabe K."/>
            <person name="Kumagai A."/>
            <person name="Itakura S."/>
            <person name="Fukuzumi Y."/>
            <person name="Fujimori Y."/>
            <person name="Komiyama M."/>
            <person name="Tashiro H."/>
            <person name="Tanigami A."/>
            <person name="Fujiwara T."/>
            <person name="Ono T."/>
            <person name="Yamada K."/>
            <person name="Fujii Y."/>
            <person name="Ozaki K."/>
            <person name="Hirao M."/>
            <person name="Ohmori Y."/>
            <person name="Kawabata A."/>
            <person name="Hikiji T."/>
            <person name="Kobatake N."/>
            <person name="Inagaki H."/>
            <person name="Ikema Y."/>
            <person name="Okamoto S."/>
            <person name="Okitani R."/>
            <person name="Kawakami T."/>
            <person name="Noguchi S."/>
            <person name="Itoh T."/>
            <person name="Shigeta K."/>
            <person name="Senba T."/>
            <person name="Matsumura K."/>
            <person name="Nakajima Y."/>
            <person name="Mizuno T."/>
            <person name="Morinaga M."/>
            <person name="Sasaki M."/>
            <person name="Togashi T."/>
            <person name="Oyama M."/>
            <person name="Hata H."/>
            <person name="Watanabe M."/>
            <person name="Komatsu T."/>
            <person name="Mizushima-Sugano J."/>
            <person name="Satoh T."/>
            <person name="Shirai Y."/>
            <person name="Takahashi Y."/>
            <person name="Nakagawa K."/>
            <person name="Okumura K."/>
            <person name="Nagase T."/>
            <person name="Nomura N."/>
            <person name="Kikuchi H."/>
            <person name="Masuho Y."/>
            <person name="Yamashita R."/>
            <person name="Nakai K."/>
            <person name="Yada T."/>
            <person name="Nakamura Y."/>
            <person name="Ohara O."/>
            <person name="Isogai T."/>
            <person name="Sugano S."/>
        </authorList>
    </citation>
    <scope>NUCLEOTIDE SEQUENCE [LARGE SCALE MRNA] (ISOFORMS 1 AND 2)</scope>
    <source>
        <tissue>Brain</tissue>
    </source>
</reference>
<reference key="2">
    <citation type="journal article" date="2003" name="Nature">
        <title>The DNA sequence and analysis of human chromosome 6.</title>
        <authorList>
            <person name="Mungall A.J."/>
            <person name="Palmer S.A."/>
            <person name="Sims S.K."/>
            <person name="Edwards C.A."/>
            <person name="Ashurst J.L."/>
            <person name="Wilming L."/>
            <person name="Jones M.C."/>
            <person name="Horton R."/>
            <person name="Hunt S.E."/>
            <person name="Scott C.E."/>
            <person name="Gilbert J.G.R."/>
            <person name="Clamp M.E."/>
            <person name="Bethel G."/>
            <person name="Milne S."/>
            <person name="Ainscough R."/>
            <person name="Almeida J.P."/>
            <person name="Ambrose K.D."/>
            <person name="Andrews T.D."/>
            <person name="Ashwell R.I.S."/>
            <person name="Babbage A.K."/>
            <person name="Bagguley C.L."/>
            <person name="Bailey J."/>
            <person name="Banerjee R."/>
            <person name="Barker D.J."/>
            <person name="Barlow K.F."/>
            <person name="Bates K."/>
            <person name="Beare D.M."/>
            <person name="Beasley H."/>
            <person name="Beasley O."/>
            <person name="Bird C.P."/>
            <person name="Blakey S.E."/>
            <person name="Bray-Allen S."/>
            <person name="Brook J."/>
            <person name="Brown A.J."/>
            <person name="Brown J.Y."/>
            <person name="Burford D.C."/>
            <person name="Burrill W."/>
            <person name="Burton J."/>
            <person name="Carder C."/>
            <person name="Carter N.P."/>
            <person name="Chapman J.C."/>
            <person name="Clark S.Y."/>
            <person name="Clark G."/>
            <person name="Clee C.M."/>
            <person name="Clegg S."/>
            <person name="Cobley V."/>
            <person name="Collier R.E."/>
            <person name="Collins J.E."/>
            <person name="Colman L.K."/>
            <person name="Corby N.R."/>
            <person name="Coville G.J."/>
            <person name="Culley K.M."/>
            <person name="Dhami P."/>
            <person name="Davies J."/>
            <person name="Dunn M."/>
            <person name="Earthrowl M.E."/>
            <person name="Ellington A.E."/>
            <person name="Evans K.A."/>
            <person name="Faulkner L."/>
            <person name="Francis M.D."/>
            <person name="Frankish A."/>
            <person name="Frankland J."/>
            <person name="French L."/>
            <person name="Garner P."/>
            <person name="Garnett J."/>
            <person name="Ghori M.J."/>
            <person name="Gilby L.M."/>
            <person name="Gillson C.J."/>
            <person name="Glithero R.J."/>
            <person name="Grafham D.V."/>
            <person name="Grant M."/>
            <person name="Gribble S."/>
            <person name="Griffiths C."/>
            <person name="Griffiths M.N.D."/>
            <person name="Hall R."/>
            <person name="Halls K.S."/>
            <person name="Hammond S."/>
            <person name="Harley J.L."/>
            <person name="Hart E.A."/>
            <person name="Heath P.D."/>
            <person name="Heathcott R."/>
            <person name="Holmes S.J."/>
            <person name="Howden P.J."/>
            <person name="Howe K.L."/>
            <person name="Howell G.R."/>
            <person name="Huckle E."/>
            <person name="Humphray S.J."/>
            <person name="Humphries M.D."/>
            <person name="Hunt A.R."/>
            <person name="Johnson C.M."/>
            <person name="Joy A.A."/>
            <person name="Kay M."/>
            <person name="Keenan S.J."/>
            <person name="Kimberley A.M."/>
            <person name="King A."/>
            <person name="Laird G.K."/>
            <person name="Langford C."/>
            <person name="Lawlor S."/>
            <person name="Leongamornlert D.A."/>
            <person name="Leversha M."/>
            <person name="Lloyd C.R."/>
            <person name="Lloyd D.M."/>
            <person name="Loveland J.E."/>
            <person name="Lovell J."/>
            <person name="Martin S."/>
            <person name="Mashreghi-Mohammadi M."/>
            <person name="Maslen G.L."/>
            <person name="Matthews L."/>
            <person name="McCann O.T."/>
            <person name="McLaren S.J."/>
            <person name="McLay K."/>
            <person name="McMurray A."/>
            <person name="Moore M.J.F."/>
            <person name="Mullikin J.C."/>
            <person name="Niblett D."/>
            <person name="Nickerson T."/>
            <person name="Novik K.L."/>
            <person name="Oliver K."/>
            <person name="Overton-Larty E.K."/>
            <person name="Parker A."/>
            <person name="Patel R."/>
            <person name="Pearce A.V."/>
            <person name="Peck A.I."/>
            <person name="Phillimore B.J.C.T."/>
            <person name="Phillips S."/>
            <person name="Plumb R.W."/>
            <person name="Porter K.M."/>
            <person name="Ramsey Y."/>
            <person name="Ranby S.A."/>
            <person name="Rice C.M."/>
            <person name="Ross M.T."/>
            <person name="Searle S.M."/>
            <person name="Sehra H.K."/>
            <person name="Sheridan E."/>
            <person name="Skuce C.D."/>
            <person name="Smith S."/>
            <person name="Smith M."/>
            <person name="Spraggon L."/>
            <person name="Squares S.L."/>
            <person name="Steward C.A."/>
            <person name="Sycamore N."/>
            <person name="Tamlyn-Hall G."/>
            <person name="Tester J."/>
            <person name="Theaker A.J."/>
            <person name="Thomas D.W."/>
            <person name="Thorpe A."/>
            <person name="Tracey A."/>
            <person name="Tromans A."/>
            <person name="Tubby B."/>
            <person name="Wall M."/>
            <person name="Wallis J.M."/>
            <person name="West A.P."/>
            <person name="White S.S."/>
            <person name="Whitehead S.L."/>
            <person name="Whittaker H."/>
            <person name="Wild A."/>
            <person name="Willey D.J."/>
            <person name="Wilmer T.E."/>
            <person name="Wood J.M."/>
            <person name="Wray P.W."/>
            <person name="Wyatt J.C."/>
            <person name="Young L."/>
            <person name="Younger R.M."/>
            <person name="Bentley D.R."/>
            <person name="Coulson A."/>
            <person name="Durbin R.M."/>
            <person name="Hubbard T."/>
            <person name="Sulston J.E."/>
            <person name="Dunham I."/>
            <person name="Rogers J."/>
            <person name="Beck S."/>
        </authorList>
    </citation>
    <scope>NUCLEOTIDE SEQUENCE [LARGE SCALE GENOMIC DNA]</scope>
</reference>
<reference key="3">
    <citation type="submission" date="2005-09" db="EMBL/GenBank/DDBJ databases">
        <authorList>
            <person name="Mural R.J."/>
            <person name="Istrail S."/>
            <person name="Sutton G.G."/>
            <person name="Florea L."/>
            <person name="Halpern A.L."/>
            <person name="Mobarry C.M."/>
            <person name="Lippert R."/>
            <person name="Walenz B."/>
            <person name="Shatkay H."/>
            <person name="Dew I."/>
            <person name="Miller J.R."/>
            <person name="Flanigan M.J."/>
            <person name="Edwards N.J."/>
            <person name="Bolanos R."/>
            <person name="Fasulo D."/>
            <person name="Halldorsson B.V."/>
            <person name="Hannenhalli S."/>
            <person name="Turner R."/>
            <person name="Yooseph S."/>
            <person name="Lu F."/>
            <person name="Nusskern D.R."/>
            <person name="Shue B.C."/>
            <person name="Zheng X.H."/>
            <person name="Zhong F."/>
            <person name="Delcher A.L."/>
            <person name="Huson D.H."/>
            <person name="Kravitz S.A."/>
            <person name="Mouchard L."/>
            <person name="Reinert K."/>
            <person name="Remington K.A."/>
            <person name="Clark A.G."/>
            <person name="Waterman M.S."/>
            <person name="Eichler E.E."/>
            <person name="Adams M.D."/>
            <person name="Hunkapiller M.W."/>
            <person name="Myers E.W."/>
            <person name="Venter J.C."/>
        </authorList>
    </citation>
    <scope>NUCLEOTIDE SEQUENCE [LARGE SCALE GENOMIC DNA]</scope>
</reference>
<reference key="4">
    <citation type="journal article" date="2004" name="Genome Res.">
        <title>The status, quality, and expansion of the NIH full-length cDNA project: the Mammalian Gene Collection (MGC).</title>
        <authorList>
            <consortium name="The MGC Project Team"/>
        </authorList>
    </citation>
    <scope>NUCLEOTIDE SEQUENCE [LARGE SCALE MRNA] (ISOFORM 1)</scope>
</reference>
<reference key="5">
    <citation type="journal article" date="2009" name="J. Biol. Chem.">
        <title>The clavesin family: neuron-specific lipid- and clathrin-binding Sec14 proteins regulating lysosomal morphology.</title>
        <authorList>
            <person name="Katoh Y."/>
            <person name="Ritter B."/>
            <person name="Gaffry T."/>
            <person name="Blondeau F."/>
            <person name="Honing S."/>
            <person name="McPherson P.S."/>
        </authorList>
    </citation>
    <scope>FUNCTION</scope>
    <scope>IDENTIFICATION IN COMPLEX WITH CLATHRIN HEAVY CHAIN AND GAMMA-ADAPTIN</scope>
    <scope>SUBCELLULAR LOCATION</scope>
    <scope>DOMAIN</scope>
</reference>
<proteinExistence type="evidence at protein level"/>
<gene>
    <name type="primary">CLVS2</name>
    <name type="synonym">C6orf212</name>
    <name type="synonym">C6orf213</name>
    <name type="synonym">RLBP1L2</name>
</gene>
<name>CLVS2_HUMAN</name>
<organism>
    <name type="scientific">Homo sapiens</name>
    <name type="common">Human</name>
    <dbReference type="NCBI Taxonomy" id="9606"/>
    <lineage>
        <taxon>Eukaryota</taxon>
        <taxon>Metazoa</taxon>
        <taxon>Chordata</taxon>
        <taxon>Craniata</taxon>
        <taxon>Vertebrata</taxon>
        <taxon>Euteleostomi</taxon>
        <taxon>Mammalia</taxon>
        <taxon>Eutheria</taxon>
        <taxon>Euarchontoglires</taxon>
        <taxon>Primates</taxon>
        <taxon>Haplorrhini</taxon>
        <taxon>Catarrhini</taxon>
        <taxon>Hominidae</taxon>
        <taxon>Homo</taxon>
    </lineage>
</organism>
<sequence length="327" mass="38000">MTHLQAGLSPETLEKARLELNENPDTLHQDIQEVRDMVITRPDIGFLRTDDAFILRFLRARKFHHFEAFRLLAQYFEYRQQNLDMFKSFKATDPGIKQALKDGFPGGLANLDHYGRKILVLFAANWDQSRYTLVDILRAILLSLEAMIEDPELQVNGFVLIIDWSNFTFKQASKLTPSMLRLAIEGLQDSFPARFGGIHFVNQPWYIHALYTVIRPFLKEKTRKRIFLHGNNLNSLHQLIHPEILPSEFGGMLPPYDMGTWARTLLDHEYDDDSEYNVDSYSMPVKEVEKELSPKSMKRSQSVVDPTVLKRMDKNEEENMQPLLSLD</sequence>
<keyword id="KW-0025">Alternative splicing</keyword>
<keyword id="KW-0968">Cytoplasmic vesicle</keyword>
<keyword id="KW-0967">Endosome</keyword>
<keyword id="KW-0333">Golgi apparatus</keyword>
<keyword id="KW-0446">Lipid-binding</keyword>
<keyword id="KW-0472">Membrane</keyword>
<keyword id="KW-0597">Phosphoprotein</keyword>
<keyword id="KW-1267">Proteomics identification</keyword>
<keyword id="KW-1185">Reference proteome</keyword>
<feature type="chain" id="PRO_0000297651" description="Clavesin-2">
    <location>
        <begin position="1"/>
        <end position="327"/>
    </location>
</feature>
<feature type="domain" description="CRAL-TRIO" evidence="3">
    <location>
        <begin position="96"/>
        <end position="257"/>
    </location>
</feature>
<feature type="region of interest" description="Disordered" evidence="4">
    <location>
        <begin position="287"/>
        <end position="327"/>
    </location>
</feature>
<feature type="modified residue" description="Phosphoserine" evidence="2">
    <location>
        <position position="325"/>
    </location>
</feature>
<feature type="splice variant" id="VSP_027325" description="In isoform 2." evidence="6">
    <location>
        <begin position="1"/>
        <end position="146"/>
    </location>
</feature>